<sequence>MKAELIAVGTEILTGQIVNTNAQFLSEKMAELGIDVYFQTAVGDNEERLLSVIDIASQRSDLVILCGGLGPTDDDLTKQTLAKYLGKALVFDEQAGQKLDTFFAHRKHTARTPNNQRQAQLIEGSVALQNQTGLAVGGLITVDGVTYVVLPGPPSELKPMVKNELVPLLSASHASLYSRVLRFFGIGESQLVTALEDLIKHQTDPTIAPYAKTGEVTLRLSTKADNQALADERLNRLEAQLLSIRTVDNQPLRRLLYGYGEDNSLARETFELLKRSGKTITAAESLTAGLFQAQLTDFAGASQVFNGGFITYSIEEKAKMLGIPLVELQRHGVVSSFTAEQMAAQARCLTNSDIGIGLTGVAGPEALEGQPAGTVFIGLATKNKVESLKVVIGGRSRLDVRYIAALYAFNMVRKALLKSENLL</sequence>
<protein>
    <recommendedName>
        <fullName evidence="1">Putative competence-damage inducible protein</fullName>
    </recommendedName>
</protein>
<dbReference type="EMBL" id="CP001129">
    <property type="protein sequence ID" value="ACG63198.1"/>
    <property type="molecule type" value="Genomic_DNA"/>
</dbReference>
<dbReference type="RefSeq" id="WP_012516442.1">
    <property type="nucleotide sequence ID" value="NC_011134.1"/>
</dbReference>
<dbReference type="SMR" id="B4U0I9"/>
<dbReference type="KEGG" id="sez:Sez_1874"/>
<dbReference type="HOGENOM" id="CLU_030805_9_3_9"/>
<dbReference type="Proteomes" id="UP000001873">
    <property type="component" value="Chromosome"/>
</dbReference>
<dbReference type="CDD" id="cd00885">
    <property type="entry name" value="cinA"/>
    <property type="match status" value="1"/>
</dbReference>
<dbReference type="Gene3D" id="3.30.70.2860">
    <property type="match status" value="1"/>
</dbReference>
<dbReference type="Gene3D" id="3.90.950.20">
    <property type="entry name" value="CinA-like"/>
    <property type="match status" value="1"/>
</dbReference>
<dbReference type="Gene3D" id="3.40.980.10">
    <property type="entry name" value="MoaB/Mog-like domain"/>
    <property type="match status" value="1"/>
</dbReference>
<dbReference type="HAMAP" id="MF_00226_B">
    <property type="entry name" value="CinA_B"/>
    <property type="match status" value="1"/>
</dbReference>
<dbReference type="InterPro" id="IPR050101">
    <property type="entry name" value="CinA"/>
</dbReference>
<dbReference type="InterPro" id="IPR036653">
    <property type="entry name" value="CinA-like_C"/>
</dbReference>
<dbReference type="InterPro" id="IPR008136">
    <property type="entry name" value="CinA_C"/>
</dbReference>
<dbReference type="InterPro" id="IPR041424">
    <property type="entry name" value="CinA_KH"/>
</dbReference>
<dbReference type="InterPro" id="IPR008135">
    <property type="entry name" value="Competence-induced_CinA"/>
</dbReference>
<dbReference type="InterPro" id="IPR036425">
    <property type="entry name" value="MoaB/Mog-like_dom_sf"/>
</dbReference>
<dbReference type="InterPro" id="IPR001453">
    <property type="entry name" value="MoaB/Mog_dom"/>
</dbReference>
<dbReference type="NCBIfam" id="TIGR00200">
    <property type="entry name" value="cinA_nterm"/>
    <property type="match status" value="1"/>
</dbReference>
<dbReference type="NCBIfam" id="TIGR00177">
    <property type="entry name" value="molyb_syn"/>
    <property type="match status" value="1"/>
</dbReference>
<dbReference type="NCBIfam" id="TIGR00199">
    <property type="entry name" value="PncC_domain"/>
    <property type="match status" value="1"/>
</dbReference>
<dbReference type="NCBIfam" id="NF001813">
    <property type="entry name" value="PRK00549.1"/>
    <property type="match status" value="1"/>
</dbReference>
<dbReference type="PANTHER" id="PTHR13939">
    <property type="entry name" value="NICOTINAMIDE-NUCLEOTIDE AMIDOHYDROLASE PNCC"/>
    <property type="match status" value="1"/>
</dbReference>
<dbReference type="PANTHER" id="PTHR13939:SF0">
    <property type="entry name" value="NMN AMIDOHYDROLASE-LIKE PROTEIN YFAY"/>
    <property type="match status" value="1"/>
</dbReference>
<dbReference type="Pfam" id="PF02464">
    <property type="entry name" value="CinA"/>
    <property type="match status" value="1"/>
</dbReference>
<dbReference type="Pfam" id="PF18146">
    <property type="entry name" value="CinA_KH"/>
    <property type="match status" value="1"/>
</dbReference>
<dbReference type="Pfam" id="PF00994">
    <property type="entry name" value="MoCF_biosynth"/>
    <property type="match status" value="1"/>
</dbReference>
<dbReference type="PIRSF" id="PIRSF006728">
    <property type="entry name" value="CinA"/>
    <property type="match status" value="1"/>
</dbReference>
<dbReference type="SMART" id="SM00852">
    <property type="entry name" value="MoCF_biosynth"/>
    <property type="match status" value="1"/>
</dbReference>
<dbReference type="SUPFAM" id="SSF142433">
    <property type="entry name" value="CinA-like"/>
    <property type="match status" value="1"/>
</dbReference>
<dbReference type="SUPFAM" id="SSF53218">
    <property type="entry name" value="Molybdenum cofactor biosynthesis proteins"/>
    <property type="match status" value="1"/>
</dbReference>
<feature type="chain" id="PRO_1000100334" description="Putative competence-damage inducible protein">
    <location>
        <begin position="1"/>
        <end position="423"/>
    </location>
</feature>
<name>CINA_STREM</name>
<reference key="1">
    <citation type="journal article" date="2008" name="PLoS ONE">
        <title>Genome sequence of a lancefield group C Streptococcus zooepidemicus strain causing epidemic nephritis: new information about an old disease.</title>
        <authorList>
            <person name="Beres S.B."/>
            <person name="Sesso R."/>
            <person name="Pinto S.W.L."/>
            <person name="Hoe N.P."/>
            <person name="Porcella S.F."/>
            <person name="Deleo F.R."/>
            <person name="Musser J.M."/>
        </authorList>
    </citation>
    <scope>NUCLEOTIDE SEQUENCE [LARGE SCALE GENOMIC DNA]</scope>
    <source>
        <strain>MGCS10565</strain>
    </source>
</reference>
<evidence type="ECO:0000255" key="1">
    <source>
        <dbReference type="HAMAP-Rule" id="MF_00226"/>
    </source>
</evidence>
<gene>
    <name evidence="1" type="primary">cinA</name>
    <name type="ordered locus">Sez_1874</name>
</gene>
<comment type="similarity">
    <text evidence="1">Belongs to the CinA family.</text>
</comment>
<organism>
    <name type="scientific">Streptococcus equi subsp. zooepidemicus (strain MGCS10565)</name>
    <dbReference type="NCBI Taxonomy" id="552526"/>
    <lineage>
        <taxon>Bacteria</taxon>
        <taxon>Bacillati</taxon>
        <taxon>Bacillota</taxon>
        <taxon>Bacilli</taxon>
        <taxon>Lactobacillales</taxon>
        <taxon>Streptococcaceae</taxon>
        <taxon>Streptococcus</taxon>
    </lineage>
</organism>
<proteinExistence type="inferred from homology"/>
<accession>B4U0I9</accession>